<reference key="1">
    <citation type="journal article" date="2005" name="DNA Res.">
        <title>Complete genome sequence of the facultative anaerobic magnetotactic bacterium Magnetospirillum sp. strain AMB-1.</title>
        <authorList>
            <person name="Matsunaga T."/>
            <person name="Okamura Y."/>
            <person name="Fukuda Y."/>
            <person name="Wahyudi A.T."/>
            <person name="Murase Y."/>
            <person name="Takeyama H."/>
        </authorList>
    </citation>
    <scope>NUCLEOTIDE SEQUENCE [LARGE SCALE GENOMIC DNA]</scope>
    <source>
        <strain>ATCC 700264 / AMB-1</strain>
    </source>
</reference>
<proteinExistence type="inferred from homology"/>
<evidence type="ECO:0000255" key="1">
    <source>
        <dbReference type="HAMAP-Rule" id="MF_01588"/>
    </source>
</evidence>
<feature type="chain" id="PRO_0000313300" description="DNA ligase">
    <location>
        <begin position="1"/>
        <end position="698"/>
    </location>
</feature>
<feature type="domain" description="BRCT" evidence="1">
    <location>
        <begin position="618"/>
        <end position="698"/>
    </location>
</feature>
<feature type="active site" description="N6-AMP-lysine intermediate" evidence="1">
    <location>
        <position position="125"/>
    </location>
</feature>
<feature type="binding site" evidence="1">
    <location>
        <begin position="40"/>
        <end position="44"/>
    </location>
    <ligand>
        <name>NAD(+)</name>
        <dbReference type="ChEBI" id="CHEBI:57540"/>
    </ligand>
</feature>
<feature type="binding site" evidence="1">
    <location>
        <begin position="89"/>
        <end position="90"/>
    </location>
    <ligand>
        <name>NAD(+)</name>
        <dbReference type="ChEBI" id="CHEBI:57540"/>
    </ligand>
</feature>
<feature type="binding site" evidence="1">
    <location>
        <position position="123"/>
    </location>
    <ligand>
        <name>NAD(+)</name>
        <dbReference type="ChEBI" id="CHEBI:57540"/>
    </ligand>
</feature>
<feature type="binding site" evidence="1">
    <location>
        <position position="146"/>
    </location>
    <ligand>
        <name>NAD(+)</name>
        <dbReference type="ChEBI" id="CHEBI:57540"/>
    </ligand>
</feature>
<feature type="binding site" evidence="1">
    <location>
        <position position="184"/>
    </location>
    <ligand>
        <name>NAD(+)</name>
        <dbReference type="ChEBI" id="CHEBI:57540"/>
    </ligand>
</feature>
<feature type="binding site" evidence="1">
    <location>
        <position position="300"/>
    </location>
    <ligand>
        <name>NAD(+)</name>
        <dbReference type="ChEBI" id="CHEBI:57540"/>
    </ligand>
</feature>
<feature type="binding site" evidence="1">
    <location>
        <position position="324"/>
    </location>
    <ligand>
        <name>NAD(+)</name>
        <dbReference type="ChEBI" id="CHEBI:57540"/>
    </ligand>
</feature>
<feature type="binding site" evidence="1">
    <location>
        <position position="417"/>
    </location>
    <ligand>
        <name>Zn(2+)</name>
        <dbReference type="ChEBI" id="CHEBI:29105"/>
    </ligand>
</feature>
<feature type="binding site" evidence="1">
    <location>
        <position position="420"/>
    </location>
    <ligand>
        <name>Zn(2+)</name>
        <dbReference type="ChEBI" id="CHEBI:29105"/>
    </ligand>
</feature>
<feature type="binding site" evidence="1">
    <location>
        <position position="435"/>
    </location>
    <ligand>
        <name>Zn(2+)</name>
        <dbReference type="ChEBI" id="CHEBI:29105"/>
    </ligand>
</feature>
<feature type="binding site" evidence="1">
    <location>
        <position position="441"/>
    </location>
    <ligand>
        <name>Zn(2+)</name>
        <dbReference type="ChEBI" id="CHEBI:29105"/>
    </ligand>
</feature>
<comment type="function">
    <text evidence="1">DNA ligase that catalyzes the formation of phosphodiester linkages between 5'-phosphoryl and 3'-hydroxyl groups in double-stranded DNA using NAD as a coenzyme and as the energy source for the reaction. It is essential for DNA replication and repair of damaged DNA.</text>
</comment>
<comment type="catalytic activity">
    <reaction evidence="1">
        <text>NAD(+) + (deoxyribonucleotide)n-3'-hydroxyl + 5'-phospho-(deoxyribonucleotide)m = (deoxyribonucleotide)n+m + AMP + beta-nicotinamide D-nucleotide.</text>
        <dbReference type="EC" id="6.5.1.2"/>
    </reaction>
</comment>
<comment type="cofactor">
    <cofactor evidence="1">
        <name>Mg(2+)</name>
        <dbReference type="ChEBI" id="CHEBI:18420"/>
    </cofactor>
    <cofactor evidence="1">
        <name>Mn(2+)</name>
        <dbReference type="ChEBI" id="CHEBI:29035"/>
    </cofactor>
</comment>
<comment type="similarity">
    <text evidence="1">Belongs to the NAD-dependent DNA ligase family. LigA subfamily.</text>
</comment>
<dbReference type="EC" id="6.5.1.2" evidence="1"/>
<dbReference type="EMBL" id="AP007255">
    <property type="protein sequence ID" value="BAE52662.1"/>
    <property type="molecule type" value="Genomic_DNA"/>
</dbReference>
<dbReference type="RefSeq" id="WP_011386212.1">
    <property type="nucleotide sequence ID" value="NC_007626.1"/>
</dbReference>
<dbReference type="SMR" id="Q2W0G3"/>
<dbReference type="STRING" id="342108.amb3858"/>
<dbReference type="KEGG" id="mag:amb3858"/>
<dbReference type="HOGENOM" id="CLU_007764_2_1_5"/>
<dbReference type="OrthoDB" id="9759736at2"/>
<dbReference type="Proteomes" id="UP000007058">
    <property type="component" value="Chromosome"/>
</dbReference>
<dbReference type="GO" id="GO:0005829">
    <property type="term" value="C:cytosol"/>
    <property type="evidence" value="ECO:0007669"/>
    <property type="project" value="TreeGrafter"/>
</dbReference>
<dbReference type="GO" id="GO:0003677">
    <property type="term" value="F:DNA binding"/>
    <property type="evidence" value="ECO:0007669"/>
    <property type="project" value="InterPro"/>
</dbReference>
<dbReference type="GO" id="GO:0003911">
    <property type="term" value="F:DNA ligase (NAD+) activity"/>
    <property type="evidence" value="ECO:0007669"/>
    <property type="project" value="UniProtKB-UniRule"/>
</dbReference>
<dbReference type="GO" id="GO:0046872">
    <property type="term" value="F:metal ion binding"/>
    <property type="evidence" value="ECO:0007669"/>
    <property type="project" value="UniProtKB-KW"/>
</dbReference>
<dbReference type="GO" id="GO:0006281">
    <property type="term" value="P:DNA repair"/>
    <property type="evidence" value="ECO:0007669"/>
    <property type="project" value="UniProtKB-KW"/>
</dbReference>
<dbReference type="GO" id="GO:0006260">
    <property type="term" value="P:DNA replication"/>
    <property type="evidence" value="ECO:0007669"/>
    <property type="project" value="UniProtKB-KW"/>
</dbReference>
<dbReference type="CDD" id="cd17748">
    <property type="entry name" value="BRCT_DNA_ligase_like"/>
    <property type="match status" value="1"/>
</dbReference>
<dbReference type="CDD" id="cd00114">
    <property type="entry name" value="LIGANc"/>
    <property type="match status" value="1"/>
</dbReference>
<dbReference type="FunFam" id="1.10.150.20:FF:000007">
    <property type="entry name" value="DNA ligase"/>
    <property type="match status" value="1"/>
</dbReference>
<dbReference type="FunFam" id="2.40.50.140:FF:000012">
    <property type="entry name" value="DNA ligase"/>
    <property type="match status" value="1"/>
</dbReference>
<dbReference type="FunFam" id="3.30.470.30:FF:000001">
    <property type="entry name" value="DNA ligase"/>
    <property type="match status" value="1"/>
</dbReference>
<dbReference type="Gene3D" id="6.20.10.30">
    <property type="match status" value="1"/>
</dbReference>
<dbReference type="Gene3D" id="1.10.150.20">
    <property type="entry name" value="5' to 3' exonuclease, C-terminal subdomain"/>
    <property type="match status" value="2"/>
</dbReference>
<dbReference type="Gene3D" id="3.40.50.10190">
    <property type="entry name" value="BRCT domain"/>
    <property type="match status" value="1"/>
</dbReference>
<dbReference type="Gene3D" id="3.30.470.30">
    <property type="entry name" value="DNA ligase/mRNA capping enzyme"/>
    <property type="match status" value="1"/>
</dbReference>
<dbReference type="Gene3D" id="1.10.287.610">
    <property type="entry name" value="Helix hairpin bin"/>
    <property type="match status" value="1"/>
</dbReference>
<dbReference type="Gene3D" id="2.40.50.140">
    <property type="entry name" value="Nucleic acid-binding proteins"/>
    <property type="match status" value="1"/>
</dbReference>
<dbReference type="HAMAP" id="MF_01588">
    <property type="entry name" value="DNA_ligase_A"/>
    <property type="match status" value="1"/>
</dbReference>
<dbReference type="InterPro" id="IPR001357">
    <property type="entry name" value="BRCT_dom"/>
</dbReference>
<dbReference type="InterPro" id="IPR036420">
    <property type="entry name" value="BRCT_dom_sf"/>
</dbReference>
<dbReference type="InterPro" id="IPR041663">
    <property type="entry name" value="DisA/LigA_HHH"/>
</dbReference>
<dbReference type="InterPro" id="IPR001679">
    <property type="entry name" value="DNA_ligase"/>
</dbReference>
<dbReference type="InterPro" id="IPR018239">
    <property type="entry name" value="DNA_ligase_AS"/>
</dbReference>
<dbReference type="InterPro" id="IPR033136">
    <property type="entry name" value="DNA_ligase_CS"/>
</dbReference>
<dbReference type="InterPro" id="IPR013839">
    <property type="entry name" value="DNAligase_adenylation"/>
</dbReference>
<dbReference type="InterPro" id="IPR013840">
    <property type="entry name" value="DNAligase_N"/>
</dbReference>
<dbReference type="InterPro" id="IPR003583">
    <property type="entry name" value="Hlx-hairpin-Hlx_DNA-bd_motif"/>
</dbReference>
<dbReference type="InterPro" id="IPR012340">
    <property type="entry name" value="NA-bd_OB-fold"/>
</dbReference>
<dbReference type="InterPro" id="IPR004150">
    <property type="entry name" value="NAD_DNA_ligase_OB"/>
</dbReference>
<dbReference type="InterPro" id="IPR010994">
    <property type="entry name" value="RuvA_2-like"/>
</dbReference>
<dbReference type="InterPro" id="IPR004149">
    <property type="entry name" value="Znf_DNAligase_C4"/>
</dbReference>
<dbReference type="NCBIfam" id="TIGR00575">
    <property type="entry name" value="dnlj"/>
    <property type="match status" value="1"/>
</dbReference>
<dbReference type="NCBIfam" id="NF005932">
    <property type="entry name" value="PRK07956.1"/>
    <property type="match status" value="1"/>
</dbReference>
<dbReference type="PANTHER" id="PTHR23389">
    <property type="entry name" value="CHROMOSOME TRANSMISSION FIDELITY FACTOR 18"/>
    <property type="match status" value="1"/>
</dbReference>
<dbReference type="PANTHER" id="PTHR23389:SF9">
    <property type="entry name" value="DNA LIGASE"/>
    <property type="match status" value="1"/>
</dbReference>
<dbReference type="Pfam" id="PF00533">
    <property type="entry name" value="BRCT"/>
    <property type="match status" value="1"/>
</dbReference>
<dbReference type="Pfam" id="PF01653">
    <property type="entry name" value="DNA_ligase_aden"/>
    <property type="match status" value="1"/>
</dbReference>
<dbReference type="Pfam" id="PF03120">
    <property type="entry name" value="DNA_ligase_OB"/>
    <property type="match status" value="1"/>
</dbReference>
<dbReference type="Pfam" id="PF03119">
    <property type="entry name" value="DNA_ligase_ZBD"/>
    <property type="match status" value="1"/>
</dbReference>
<dbReference type="Pfam" id="PF12826">
    <property type="entry name" value="HHH_2"/>
    <property type="match status" value="1"/>
</dbReference>
<dbReference type="PIRSF" id="PIRSF001604">
    <property type="entry name" value="LigA"/>
    <property type="match status" value="1"/>
</dbReference>
<dbReference type="SMART" id="SM00292">
    <property type="entry name" value="BRCT"/>
    <property type="match status" value="1"/>
</dbReference>
<dbReference type="SMART" id="SM00278">
    <property type="entry name" value="HhH1"/>
    <property type="match status" value="3"/>
</dbReference>
<dbReference type="SMART" id="SM00532">
    <property type="entry name" value="LIGANc"/>
    <property type="match status" value="1"/>
</dbReference>
<dbReference type="SUPFAM" id="SSF52113">
    <property type="entry name" value="BRCT domain"/>
    <property type="match status" value="1"/>
</dbReference>
<dbReference type="SUPFAM" id="SSF56091">
    <property type="entry name" value="DNA ligase/mRNA capping enzyme, catalytic domain"/>
    <property type="match status" value="1"/>
</dbReference>
<dbReference type="SUPFAM" id="SSF50249">
    <property type="entry name" value="Nucleic acid-binding proteins"/>
    <property type="match status" value="1"/>
</dbReference>
<dbReference type="SUPFAM" id="SSF47781">
    <property type="entry name" value="RuvA domain 2-like"/>
    <property type="match status" value="1"/>
</dbReference>
<dbReference type="PROSITE" id="PS50172">
    <property type="entry name" value="BRCT"/>
    <property type="match status" value="1"/>
</dbReference>
<dbReference type="PROSITE" id="PS01055">
    <property type="entry name" value="DNA_LIGASE_N1"/>
    <property type="match status" value="1"/>
</dbReference>
<dbReference type="PROSITE" id="PS01056">
    <property type="entry name" value="DNA_LIGASE_N2"/>
    <property type="match status" value="1"/>
</dbReference>
<keyword id="KW-0227">DNA damage</keyword>
<keyword id="KW-0234">DNA repair</keyword>
<keyword id="KW-0235">DNA replication</keyword>
<keyword id="KW-0436">Ligase</keyword>
<keyword id="KW-0460">Magnesium</keyword>
<keyword id="KW-0464">Manganese</keyword>
<keyword id="KW-0479">Metal-binding</keyword>
<keyword id="KW-0520">NAD</keyword>
<keyword id="KW-0862">Zinc</keyword>
<gene>
    <name evidence="1" type="primary">ligA</name>
    <name type="ordered locus">amb3858</name>
</gene>
<sequence>MIPVEALTPFEARIEHAELVETIARWDEAYHAKDAPEVPDDVYDGAKRRLARIEGRFPELAAKSPIRDKVGAAPSEGFGKLVHAVPMLSLDNAFAPEDVAEFDAKVRRFLGLGDEAPLAYVAEPKIDGLSINLRYEGGRFVSAATRGDGAEGEDVTRNLETFPATQLPRTLGPDAPAVIEIRGEVYMTKADFLALNQRQEAAGEKLFANPRNAAAGSLRQLDPKVTASRPLSLFAYAMGEASAPPAASHWEYLERLKAWGFVVNPLIRRCDGVAGLLSAYESLGEARATLAYDIDGIVYKVDDIELQRRLGFVSRSPRWAIAHKFPAEQATTLLEAIDIQVGRTGALTPVARLTPVNVGGVVVSNATLHNEDEIARKDVRIGDTVIVQRAGDVIPQIVGVVPGKPRGAVPFVYPETCPVCGAHAVRPEGEVIRRCTGGLTCEAQAKERLKHFVSRNAFDIEGLGEKNIEFLWEKGWVRGPADIFRLKARNDAELLQRLENFEGWGKRSTEKLFESIKTRSAMGLERFIFALGIRQIGEATAKRLARHYGSFGAWRAAMLAGTEEARAELTSIEDIGPSVAGDLLDFFSEEHNVQAVDDLVAAMAALDGAVEDAKVIESSASPVAGKAVVFTGTLVTMTRPEAKARAEALGAKVVGSVSKKTDYVVVGADAGSKAAEAVKLGIATLSEQEWLALTGAAD</sequence>
<accession>Q2W0G3</accession>
<protein>
    <recommendedName>
        <fullName evidence="1">DNA ligase</fullName>
        <ecNumber evidence="1">6.5.1.2</ecNumber>
    </recommendedName>
    <alternativeName>
        <fullName evidence="1">Polydeoxyribonucleotide synthase [NAD(+)]</fullName>
    </alternativeName>
</protein>
<organism>
    <name type="scientific">Paramagnetospirillum magneticum (strain ATCC 700264 / AMB-1)</name>
    <name type="common">Magnetospirillum magneticum</name>
    <dbReference type="NCBI Taxonomy" id="342108"/>
    <lineage>
        <taxon>Bacteria</taxon>
        <taxon>Pseudomonadati</taxon>
        <taxon>Pseudomonadota</taxon>
        <taxon>Alphaproteobacteria</taxon>
        <taxon>Rhodospirillales</taxon>
        <taxon>Magnetospirillaceae</taxon>
        <taxon>Paramagnetospirillum</taxon>
    </lineage>
</organism>
<name>DNLJ_PARM1</name>